<comment type="function">
    <text evidence="1">Plays an essential role in the initiation and regulation of chromosomal replication. ATP-DnaA binds to the origin of replication (oriC) to initiate formation of the DNA replication initiation complex once per cell cycle. Binds the DnaA box (a 9 base pair repeat at the origin) and separates the double-stranded (ds)DNA. Forms a right-handed helical filament on oriC DNA; dsDNA binds to the exterior of the filament while single-stranded (ss)DNA is stabiized in the filament's interior. The ATP-DnaA-oriC complex binds and stabilizes one strand of the AT-rich DNA unwinding element (DUE), permitting loading of DNA polymerase. After initiation quickly degrades to an ADP-DnaA complex that is not apt for DNA replication. Binds acidic phospholipids.</text>
</comment>
<comment type="subunit">
    <text evidence="1">Oligomerizes as a right-handed, spiral filament on DNA at oriC.</text>
</comment>
<comment type="subcellular location">
    <subcellularLocation>
        <location evidence="1">Cytoplasm</location>
    </subcellularLocation>
</comment>
<comment type="domain">
    <text evidence="1">Domain I is involved in oligomerization and binding regulators, domain II is flexibile and of varying length in different bacteria, domain III forms the AAA+ region, while domain IV binds dsDNA.</text>
</comment>
<comment type="similarity">
    <text evidence="1">Belongs to the DnaA family.</text>
</comment>
<protein>
    <recommendedName>
        <fullName evidence="1">Chromosomal replication initiator protein DnaA</fullName>
    </recommendedName>
</protein>
<dbReference type="EMBL" id="FM204883">
    <property type="protein sequence ID" value="CAW91873.1"/>
    <property type="molecule type" value="Genomic_DNA"/>
</dbReference>
<dbReference type="RefSeq" id="WP_012678753.1">
    <property type="nucleotide sequence ID" value="NC_012471.1"/>
</dbReference>
<dbReference type="SMR" id="C0M7C0"/>
<dbReference type="KEGG" id="seu:SEQ_0001"/>
<dbReference type="HOGENOM" id="CLU_026910_3_2_9"/>
<dbReference type="OrthoDB" id="9807019at2"/>
<dbReference type="Proteomes" id="UP000001365">
    <property type="component" value="Chromosome"/>
</dbReference>
<dbReference type="GO" id="GO:0005737">
    <property type="term" value="C:cytoplasm"/>
    <property type="evidence" value="ECO:0007669"/>
    <property type="project" value="UniProtKB-SubCell"/>
</dbReference>
<dbReference type="GO" id="GO:0005886">
    <property type="term" value="C:plasma membrane"/>
    <property type="evidence" value="ECO:0007669"/>
    <property type="project" value="TreeGrafter"/>
</dbReference>
<dbReference type="GO" id="GO:0005524">
    <property type="term" value="F:ATP binding"/>
    <property type="evidence" value="ECO:0007669"/>
    <property type="project" value="UniProtKB-UniRule"/>
</dbReference>
<dbReference type="GO" id="GO:0016887">
    <property type="term" value="F:ATP hydrolysis activity"/>
    <property type="evidence" value="ECO:0007669"/>
    <property type="project" value="InterPro"/>
</dbReference>
<dbReference type="GO" id="GO:0003688">
    <property type="term" value="F:DNA replication origin binding"/>
    <property type="evidence" value="ECO:0007669"/>
    <property type="project" value="UniProtKB-UniRule"/>
</dbReference>
<dbReference type="GO" id="GO:0008289">
    <property type="term" value="F:lipid binding"/>
    <property type="evidence" value="ECO:0007669"/>
    <property type="project" value="UniProtKB-KW"/>
</dbReference>
<dbReference type="GO" id="GO:0006270">
    <property type="term" value="P:DNA replication initiation"/>
    <property type="evidence" value="ECO:0007669"/>
    <property type="project" value="UniProtKB-UniRule"/>
</dbReference>
<dbReference type="GO" id="GO:0006275">
    <property type="term" value="P:regulation of DNA replication"/>
    <property type="evidence" value="ECO:0007669"/>
    <property type="project" value="UniProtKB-UniRule"/>
</dbReference>
<dbReference type="CDD" id="cd00009">
    <property type="entry name" value="AAA"/>
    <property type="match status" value="1"/>
</dbReference>
<dbReference type="CDD" id="cd06571">
    <property type="entry name" value="Bac_DnaA_C"/>
    <property type="match status" value="1"/>
</dbReference>
<dbReference type="FunFam" id="1.10.1750.10:FF:000002">
    <property type="entry name" value="Chromosomal replication initiator protein DnaA"/>
    <property type="match status" value="1"/>
</dbReference>
<dbReference type="FunFam" id="3.40.50.300:FF:000668">
    <property type="entry name" value="Chromosomal replication initiator protein DnaA"/>
    <property type="match status" value="1"/>
</dbReference>
<dbReference type="Gene3D" id="1.10.1750.10">
    <property type="match status" value="1"/>
</dbReference>
<dbReference type="Gene3D" id="1.10.8.60">
    <property type="match status" value="1"/>
</dbReference>
<dbReference type="Gene3D" id="3.40.50.300">
    <property type="entry name" value="P-loop containing nucleotide triphosphate hydrolases"/>
    <property type="match status" value="1"/>
</dbReference>
<dbReference type="HAMAP" id="MF_00377">
    <property type="entry name" value="DnaA_bact"/>
    <property type="match status" value="1"/>
</dbReference>
<dbReference type="InterPro" id="IPR003593">
    <property type="entry name" value="AAA+_ATPase"/>
</dbReference>
<dbReference type="InterPro" id="IPR001957">
    <property type="entry name" value="Chromosome_initiator_DnaA"/>
</dbReference>
<dbReference type="InterPro" id="IPR020591">
    <property type="entry name" value="Chromosome_initiator_DnaA-like"/>
</dbReference>
<dbReference type="InterPro" id="IPR018312">
    <property type="entry name" value="Chromosome_initiator_DnaA_CS"/>
</dbReference>
<dbReference type="InterPro" id="IPR013159">
    <property type="entry name" value="DnaA_C"/>
</dbReference>
<dbReference type="InterPro" id="IPR013317">
    <property type="entry name" value="DnaA_dom"/>
</dbReference>
<dbReference type="InterPro" id="IPR027417">
    <property type="entry name" value="P-loop_NTPase"/>
</dbReference>
<dbReference type="InterPro" id="IPR010921">
    <property type="entry name" value="Trp_repressor/repl_initiator"/>
</dbReference>
<dbReference type="NCBIfam" id="TIGR00362">
    <property type="entry name" value="DnaA"/>
    <property type="match status" value="1"/>
</dbReference>
<dbReference type="PANTHER" id="PTHR30050">
    <property type="entry name" value="CHROMOSOMAL REPLICATION INITIATOR PROTEIN DNAA"/>
    <property type="match status" value="1"/>
</dbReference>
<dbReference type="PANTHER" id="PTHR30050:SF2">
    <property type="entry name" value="CHROMOSOMAL REPLICATION INITIATOR PROTEIN DNAA"/>
    <property type="match status" value="1"/>
</dbReference>
<dbReference type="Pfam" id="PF00308">
    <property type="entry name" value="Bac_DnaA"/>
    <property type="match status" value="1"/>
</dbReference>
<dbReference type="Pfam" id="PF08299">
    <property type="entry name" value="Bac_DnaA_C"/>
    <property type="match status" value="1"/>
</dbReference>
<dbReference type="PRINTS" id="PR00051">
    <property type="entry name" value="DNAA"/>
</dbReference>
<dbReference type="SMART" id="SM00382">
    <property type="entry name" value="AAA"/>
    <property type="match status" value="1"/>
</dbReference>
<dbReference type="SMART" id="SM00760">
    <property type="entry name" value="Bac_DnaA_C"/>
    <property type="match status" value="1"/>
</dbReference>
<dbReference type="SUPFAM" id="SSF52540">
    <property type="entry name" value="P-loop containing nucleoside triphosphate hydrolases"/>
    <property type="match status" value="1"/>
</dbReference>
<dbReference type="SUPFAM" id="SSF48295">
    <property type="entry name" value="TrpR-like"/>
    <property type="match status" value="1"/>
</dbReference>
<dbReference type="PROSITE" id="PS01008">
    <property type="entry name" value="DNAA"/>
    <property type="match status" value="1"/>
</dbReference>
<reference key="1">
    <citation type="journal article" date="2009" name="PLoS Pathog.">
        <title>Genomic evidence for the evolution of Streptococcus equi: host restriction, increased virulence, and genetic exchange with human pathogens.</title>
        <authorList>
            <person name="Holden M.T.G."/>
            <person name="Heather Z."/>
            <person name="Paillot R."/>
            <person name="Steward K.F."/>
            <person name="Webb K."/>
            <person name="Ainslie F."/>
            <person name="Jourdan T."/>
            <person name="Bason N.C."/>
            <person name="Holroyd N.E."/>
            <person name="Mungall K."/>
            <person name="Quail M.A."/>
            <person name="Sanders M."/>
            <person name="Simmonds M."/>
            <person name="Willey D."/>
            <person name="Brooks K."/>
            <person name="Aanensen D.M."/>
            <person name="Spratt B.G."/>
            <person name="Jolley K.A."/>
            <person name="Maiden M.C.J."/>
            <person name="Kehoe M."/>
            <person name="Chanter N."/>
            <person name="Bentley S.D."/>
            <person name="Robinson C."/>
            <person name="Maskell D.J."/>
            <person name="Parkhill J."/>
            <person name="Waller A.S."/>
        </authorList>
    </citation>
    <scope>NUCLEOTIDE SEQUENCE [LARGE SCALE GENOMIC DNA]</scope>
    <source>
        <strain>4047</strain>
    </source>
</reference>
<sequence>MTENEQIFWNRVLELAQSQLKQATYEFFVHDARLIKVDNHVATIFLDQMKELFWEKNLKDVILTAGFEVYNAQIAVDYVYEDDLMIEQQHQGQQGYTEQAFQQLPAVQSDLNPKYSFDNFIQGDENRWAVAASIAVANTPGTTYNPLFIWGGPGLGKTHLLNAIGNSVLLENPNARIKYITAENFINEFVVHIRLDTMDELKEKFRNLDLLLIDDIQSLAKKTLSGTQEEFFNTFNALHNNNKQIVLTSDRTPDHLNDLEDRLVTRFKWGLTVNITPPDFETRVAILTNKIQEYNFIFPQDTIEYLAGQFDSNVRDLEGALKDISLVANFKQIDTITVDIAAEAIRARKQDGPKMTVIPIEEIQAQVGKFYGVTVKEIKATKRTQDIVLARQVAMFLAREMTDNSLPKIGKEFGGRDHSTVLHAYNKIKNMIGQDESLRIEIETIKNKIK</sequence>
<organism>
    <name type="scientific">Streptococcus equi subsp. equi (strain 4047)</name>
    <dbReference type="NCBI Taxonomy" id="553482"/>
    <lineage>
        <taxon>Bacteria</taxon>
        <taxon>Bacillati</taxon>
        <taxon>Bacillota</taxon>
        <taxon>Bacilli</taxon>
        <taxon>Lactobacillales</taxon>
        <taxon>Streptococcaceae</taxon>
        <taxon>Streptococcus</taxon>
    </lineage>
</organism>
<feature type="chain" id="PRO_1000189809" description="Chromosomal replication initiator protein DnaA">
    <location>
        <begin position="1"/>
        <end position="450"/>
    </location>
</feature>
<feature type="region of interest" description="Domain I, interacts with DnaA modulators" evidence="1">
    <location>
        <begin position="1"/>
        <end position="77"/>
    </location>
</feature>
<feature type="region of interest" description="Domain II" evidence="1">
    <location>
        <begin position="77"/>
        <end position="109"/>
    </location>
</feature>
<feature type="region of interest" description="Domain III, AAA+ region" evidence="1">
    <location>
        <begin position="110"/>
        <end position="328"/>
    </location>
</feature>
<feature type="region of interest" description="Domain IV, binds dsDNA" evidence="1">
    <location>
        <begin position="329"/>
        <end position="450"/>
    </location>
</feature>
<feature type="binding site" evidence="1">
    <location>
        <position position="154"/>
    </location>
    <ligand>
        <name>ATP</name>
        <dbReference type="ChEBI" id="CHEBI:30616"/>
    </ligand>
</feature>
<feature type="binding site" evidence="1">
    <location>
        <position position="156"/>
    </location>
    <ligand>
        <name>ATP</name>
        <dbReference type="ChEBI" id="CHEBI:30616"/>
    </ligand>
</feature>
<feature type="binding site" evidence="1">
    <location>
        <position position="157"/>
    </location>
    <ligand>
        <name>ATP</name>
        <dbReference type="ChEBI" id="CHEBI:30616"/>
    </ligand>
</feature>
<feature type="binding site" evidence="1">
    <location>
        <position position="158"/>
    </location>
    <ligand>
        <name>ATP</name>
        <dbReference type="ChEBI" id="CHEBI:30616"/>
    </ligand>
</feature>
<gene>
    <name evidence="1" type="primary">dnaA</name>
    <name type="ordered locus">SEQ_0001</name>
</gene>
<evidence type="ECO:0000255" key="1">
    <source>
        <dbReference type="HAMAP-Rule" id="MF_00377"/>
    </source>
</evidence>
<name>DNAA_STRE4</name>
<proteinExistence type="inferred from homology"/>
<accession>C0M7C0</accession>
<keyword id="KW-0067">ATP-binding</keyword>
<keyword id="KW-0963">Cytoplasm</keyword>
<keyword id="KW-0235">DNA replication</keyword>
<keyword id="KW-0238">DNA-binding</keyword>
<keyword id="KW-0446">Lipid-binding</keyword>
<keyword id="KW-0547">Nucleotide-binding</keyword>